<comment type="function">
    <text evidence="2">GTP hydrolase that promotes the GTP-dependent binding of aminoacyl-tRNA to the A-site of ribosomes during protein biosynthesis.</text>
</comment>
<comment type="catalytic activity">
    <reaction evidence="2">
        <text>GTP + H2O = GDP + phosphate + H(+)</text>
        <dbReference type="Rhea" id="RHEA:19669"/>
        <dbReference type="ChEBI" id="CHEBI:15377"/>
        <dbReference type="ChEBI" id="CHEBI:15378"/>
        <dbReference type="ChEBI" id="CHEBI:37565"/>
        <dbReference type="ChEBI" id="CHEBI:43474"/>
        <dbReference type="ChEBI" id="CHEBI:58189"/>
        <dbReference type="EC" id="3.6.5.3"/>
    </reaction>
    <physiologicalReaction direction="left-to-right" evidence="2">
        <dbReference type="Rhea" id="RHEA:19670"/>
    </physiologicalReaction>
</comment>
<comment type="subunit">
    <text evidence="2">Monomer.</text>
</comment>
<comment type="subcellular location">
    <subcellularLocation>
        <location evidence="2">Cytoplasm</location>
    </subcellularLocation>
</comment>
<comment type="similarity">
    <text evidence="2">Belongs to the TRAFAC class translation factor GTPase superfamily. Classic translation factor GTPase family. EF-Tu/EF-1A subfamily.</text>
</comment>
<gene>
    <name evidence="2" type="primary">tuf</name>
    <name type="ordered locus">Minf_0797</name>
</gene>
<sequence length="394" mass="43855">MAKEAFLRKKPHINVGTIGHVDHGKTTLTSAITYVLAKKGLAQKMAYDQIDKAPEEKERGITINTAHVEYESDKRHYAHVDCPGHADYIKNMITGAAQMDGAILVVSAADGPMPQTREHILLARQVGVPYIVVFLNKVDMVDDKELLELVELEVRELLNQYGFPGDKIPIIKGSALKALEGDPEYEKNILELVEAMDNYIPIPERPKDQPFLMPIEDVFNIEGRGTVVTGRVERGTLKRMEEVEIVGIRPTTKTVVTDIEMFRKTLDTAEAGDNVGLLLRGIKKDDVERGQVVAKPGTITPHHKFNAQVYVLKKEEGGRHTAFFNGYRPQFFFRTTDVTGTVTLKEGVEMVMPGDNVEFMVELISPIAMEKSMRFAIREGGKTVGAGVVTEIIE</sequence>
<organism>
    <name type="scientific">Methylacidiphilum infernorum (isolate V4)</name>
    <name type="common">Methylokorus infernorum (strain V4)</name>
    <dbReference type="NCBI Taxonomy" id="481448"/>
    <lineage>
        <taxon>Bacteria</taxon>
        <taxon>Pseudomonadati</taxon>
        <taxon>Verrucomicrobiota</taxon>
        <taxon>Methylacidiphilae</taxon>
        <taxon>Methylacidiphilales</taxon>
        <taxon>Methylacidiphilaceae</taxon>
        <taxon>Methylacidiphilum (ex Ratnadevi et al. 2023)</taxon>
    </lineage>
</organism>
<name>EFTU_METI4</name>
<keyword id="KW-0963">Cytoplasm</keyword>
<keyword id="KW-0251">Elongation factor</keyword>
<keyword id="KW-0342">GTP-binding</keyword>
<keyword id="KW-0378">Hydrolase</keyword>
<keyword id="KW-0460">Magnesium</keyword>
<keyword id="KW-0479">Metal-binding</keyword>
<keyword id="KW-0547">Nucleotide-binding</keyword>
<keyword id="KW-0648">Protein biosynthesis</keyword>
<feature type="chain" id="PRO_1000095076" description="Elongation factor Tu">
    <location>
        <begin position="1"/>
        <end position="394"/>
    </location>
</feature>
<feature type="domain" description="tr-type G">
    <location>
        <begin position="10"/>
        <end position="204"/>
    </location>
</feature>
<feature type="region of interest" description="G1" evidence="1">
    <location>
        <begin position="19"/>
        <end position="26"/>
    </location>
</feature>
<feature type="region of interest" description="G2" evidence="1">
    <location>
        <begin position="60"/>
        <end position="64"/>
    </location>
</feature>
<feature type="region of interest" description="G3" evidence="1">
    <location>
        <begin position="81"/>
        <end position="84"/>
    </location>
</feature>
<feature type="region of interest" description="G4" evidence="1">
    <location>
        <begin position="136"/>
        <end position="139"/>
    </location>
</feature>
<feature type="region of interest" description="G5" evidence="1">
    <location>
        <begin position="174"/>
        <end position="176"/>
    </location>
</feature>
<feature type="binding site" evidence="2">
    <location>
        <begin position="19"/>
        <end position="26"/>
    </location>
    <ligand>
        <name>GTP</name>
        <dbReference type="ChEBI" id="CHEBI:37565"/>
    </ligand>
</feature>
<feature type="binding site" evidence="2">
    <location>
        <position position="26"/>
    </location>
    <ligand>
        <name>Mg(2+)</name>
        <dbReference type="ChEBI" id="CHEBI:18420"/>
    </ligand>
</feature>
<feature type="binding site" evidence="2">
    <location>
        <begin position="81"/>
        <end position="85"/>
    </location>
    <ligand>
        <name>GTP</name>
        <dbReference type="ChEBI" id="CHEBI:37565"/>
    </ligand>
</feature>
<feature type="binding site" evidence="2">
    <location>
        <begin position="136"/>
        <end position="139"/>
    </location>
    <ligand>
        <name>GTP</name>
        <dbReference type="ChEBI" id="CHEBI:37565"/>
    </ligand>
</feature>
<proteinExistence type="inferred from homology"/>
<evidence type="ECO:0000250" key="1"/>
<evidence type="ECO:0000255" key="2">
    <source>
        <dbReference type="HAMAP-Rule" id="MF_00118"/>
    </source>
</evidence>
<reference key="1">
    <citation type="journal article" date="2008" name="Biol. Direct">
        <title>Complete genome sequence of the extremely acidophilic methanotroph isolate V4, Methylacidiphilum infernorum, a representative of the bacterial phylum Verrucomicrobia.</title>
        <authorList>
            <person name="Hou S."/>
            <person name="Makarova K.S."/>
            <person name="Saw J.H."/>
            <person name="Senin P."/>
            <person name="Ly B.V."/>
            <person name="Zhou Z."/>
            <person name="Ren Y."/>
            <person name="Wang J."/>
            <person name="Galperin M.Y."/>
            <person name="Omelchenko M.V."/>
            <person name="Wolf Y.I."/>
            <person name="Yutin N."/>
            <person name="Koonin E.V."/>
            <person name="Stott M.B."/>
            <person name="Mountain B.W."/>
            <person name="Crowe M.A."/>
            <person name="Smirnova A.V."/>
            <person name="Dunfield P.F."/>
            <person name="Feng L."/>
            <person name="Wang L."/>
            <person name="Alam M."/>
        </authorList>
    </citation>
    <scope>NUCLEOTIDE SEQUENCE [LARGE SCALE GENOMIC DNA]</scope>
    <source>
        <strain>Isolate V4</strain>
    </source>
</reference>
<dbReference type="EC" id="3.6.5.3" evidence="2"/>
<dbReference type="EMBL" id="CP000975">
    <property type="protein sequence ID" value="ACD82852.1"/>
    <property type="molecule type" value="Genomic_DNA"/>
</dbReference>
<dbReference type="RefSeq" id="WP_012463134.1">
    <property type="nucleotide sequence ID" value="NC_010794.1"/>
</dbReference>
<dbReference type="SMR" id="B3E156"/>
<dbReference type="STRING" id="481448.Minf_0797"/>
<dbReference type="KEGG" id="min:Minf_0797"/>
<dbReference type="eggNOG" id="COG0050">
    <property type="taxonomic scope" value="Bacteria"/>
</dbReference>
<dbReference type="HOGENOM" id="CLU_007265_0_1_0"/>
<dbReference type="OrthoDB" id="9804504at2"/>
<dbReference type="Proteomes" id="UP000009149">
    <property type="component" value="Chromosome"/>
</dbReference>
<dbReference type="GO" id="GO:0005829">
    <property type="term" value="C:cytosol"/>
    <property type="evidence" value="ECO:0007669"/>
    <property type="project" value="TreeGrafter"/>
</dbReference>
<dbReference type="GO" id="GO:0005525">
    <property type="term" value="F:GTP binding"/>
    <property type="evidence" value="ECO:0007669"/>
    <property type="project" value="UniProtKB-UniRule"/>
</dbReference>
<dbReference type="GO" id="GO:0003924">
    <property type="term" value="F:GTPase activity"/>
    <property type="evidence" value="ECO:0007669"/>
    <property type="project" value="InterPro"/>
</dbReference>
<dbReference type="GO" id="GO:0003746">
    <property type="term" value="F:translation elongation factor activity"/>
    <property type="evidence" value="ECO:0007669"/>
    <property type="project" value="UniProtKB-UniRule"/>
</dbReference>
<dbReference type="CDD" id="cd01884">
    <property type="entry name" value="EF_Tu"/>
    <property type="match status" value="1"/>
</dbReference>
<dbReference type="CDD" id="cd03697">
    <property type="entry name" value="EFTU_II"/>
    <property type="match status" value="1"/>
</dbReference>
<dbReference type="CDD" id="cd03707">
    <property type="entry name" value="EFTU_III"/>
    <property type="match status" value="1"/>
</dbReference>
<dbReference type="FunFam" id="2.40.30.10:FF:000001">
    <property type="entry name" value="Elongation factor Tu"/>
    <property type="match status" value="1"/>
</dbReference>
<dbReference type="FunFam" id="3.40.50.300:FF:000003">
    <property type="entry name" value="Elongation factor Tu"/>
    <property type="match status" value="1"/>
</dbReference>
<dbReference type="Gene3D" id="3.40.50.300">
    <property type="entry name" value="P-loop containing nucleotide triphosphate hydrolases"/>
    <property type="match status" value="1"/>
</dbReference>
<dbReference type="Gene3D" id="2.40.30.10">
    <property type="entry name" value="Translation factors"/>
    <property type="match status" value="2"/>
</dbReference>
<dbReference type="HAMAP" id="MF_00118_B">
    <property type="entry name" value="EF_Tu_B"/>
    <property type="match status" value="1"/>
</dbReference>
<dbReference type="InterPro" id="IPR041709">
    <property type="entry name" value="EF-Tu_GTP-bd"/>
</dbReference>
<dbReference type="InterPro" id="IPR050055">
    <property type="entry name" value="EF-Tu_GTPase"/>
</dbReference>
<dbReference type="InterPro" id="IPR004161">
    <property type="entry name" value="EFTu-like_2"/>
</dbReference>
<dbReference type="InterPro" id="IPR033720">
    <property type="entry name" value="EFTU_2"/>
</dbReference>
<dbReference type="InterPro" id="IPR031157">
    <property type="entry name" value="G_TR_CS"/>
</dbReference>
<dbReference type="InterPro" id="IPR027417">
    <property type="entry name" value="P-loop_NTPase"/>
</dbReference>
<dbReference type="InterPro" id="IPR005225">
    <property type="entry name" value="Small_GTP-bd"/>
</dbReference>
<dbReference type="InterPro" id="IPR000795">
    <property type="entry name" value="T_Tr_GTP-bd_dom"/>
</dbReference>
<dbReference type="InterPro" id="IPR009000">
    <property type="entry name" value="Transl_B-barrel_sf"/>
</dbReference>
<dbReference type="InterPro" id="IPR009001">
    <property type="entry name" value="Transl_elong_EF1A/Init_IF2_C"/>
</dbReference>
<dbReference type="InterPro" id="IPR004541">
    <property type="entry name" value="Transl_elong_EFTu/EF1A_bac/org"/>
</dbReference>
<dbReference type="InterPro" id="IPR004160">
    <property type="entry name" value="Transl_elong_EFTu/EF1A_C"/>
</dbReference>
<dbReference type="NCBIfam" id="TIGR00485">
    <property type="entry name" value="EF-Tu"/>
    <property type="match status" value="1"/>
</dbReference>
<dbReference type="NCBIfam" id="NF000766">
    <property type="entry name" value="PRK00049.1"/>
    <property type="match status" value="1"/>
</dbReference>
<dbReference type="NCBIfam" id="NF009372">
    <property type="entry name" value="PRK12735.1"/>
    <property type="match status" value="1"/>
</dbReference>
<dbReference type="NCBIfam" id="NF009373">
    <property type="entry name" value="PRK12736.1"/>
    <property type="match status" value="1"/>
</dbReference>
<dbReference type="NCBIfam" id="TIGR00231">
    <property type="entry name" value="small_GTP"/>
    <property type="match status" value="1"/>
</dbReference>
<dbReference type="PANTHER" id="PTHR43721:SF22">
    <property type="entry name" value="ELONGATION FACTOR TU, MITOCHONDRIAL"/>
    <property type="match status" value="1"/>
</dbReference>
<dbReference type="PANTHER" id="PTHR43721">
    <property type="entry name" value="ELONGATION FACTOR TU-RELATED"/>
    <property type="match status" value="1"/>
</dbReference>
<dbReference type="Pfam" id="PF00009">
    <property type="entry name" value="GTP_EFTU"/>
    <property type="match status" value="1"/>
</dbReference>
<dbReference type="Pfam" id="PF03144">
    <property type="entry name" value="GTP_EFTU_D2"/>
    <property type="match status" value="1"/>
</dbReference>
<dbReference type="Pfam" id="PF03143">
    <property type="entry name" value="GTP_EFTU_D3"/>
    <property type="match status" value="1"/>
</dbReference>
<dbReference type="PRINTS" id="PR00315">
    <property type="entry name" value="ELONGATNFCT"/>
</dbReference>
<dbReference type="SUPFAM" id="SSF50465">
    <property type="entry name" value="EF-Tu/eEF-1alpha/eIF2-gamma C-terminal domain"/>
    <property type="match status" value="1"/>
</dbReference>
<dbReference type="SUPFAM" id="SSF52540">
    <property type="entry name" value="P-loop containing nucleoside triphosphate hydrolases"/>
    <property type="match status" value="1"/>
</dbReference>
<dbReference type="SUPFAM" id="SSF50447">
    <property type="entry name" value="Translation proteins"/>
    <property type="match status" value="1"/>
</dbReference>
<dbReference type="PROSITE" id="PS00301">
    <property type="entry name" value="G_TR_1"/>
    <property type="match status" value="1"/>
</dbReference>
<dbReference type="PROSITE" id="PS51722">
    <property type="entry name" value="G_TR_2"/>
    <property type="match status" value="1"/>
</dbReference>
<accession>B3E156</accession>
<protein>
    <recommendedName>
        <fullName evidence="2">Elongation factor Tu</fullName>
        <shortName evidence="2">EF-Tu</shortName>
        <ecNumber evidence="2">3.6.5.3</ecNumber>
    </recommendedName>
</protein>